<evidence type="ECO:0000255" key="1">
    <source>
        <dbReference type="HAMAP-Rule" id="MF_01547"/>
    </source>
</evidence>
<gene>
    <name evidence="1" type="primary">rlmE</name>
    <name evidence="1" type="synonym">ftsJ</name>
    <name evidence="1" type="synonym">rrmJ</name>
    <name type="ordered locus">Csal_3082</name>
</gene>
<feature type="chain" id="PRO_0000282739" description="Ribosomal RNA large subunit methyltransferase E">
    <location>
        <begin position="1"/>
        <end position="210"/>
    </location>
</feature>
<feature type="active site" description="Proton acceptor" evidence="1">
    <location>
        <position position="165"/>
    </location>
</feature>
<feature type="binding site" evidence="1">
    <location>
        <position position="64"/>
    </location>
    <ligand>
        <name>S-adenosyl-L-methionine</name>
        <dbReference type="ChEBI" id="CHEBI:59789"/>
    </ligand>
</feature>
<feature type="binding site" evidence="1">
    <location>
        <position position="66"/>
    </location>
    <ligand>
        <name>S-adenosyl-L-methionine</name>
        <dbReference type="ChEBI" id="CHEBI:59789"/>
    </ligand>
</feature>
<feature type="binding site" evidence="1">
    <location>
        <position position="84"/>
    </location>
    <ligand>
        <name>S-adenosyl-L-methionine</name>
        <dbReference type="ChEBI" id="CHEBI:59789"/>
    </ligand>
</feature>
<feature type="binding site" evidence="1">
    <location>
        <position position="100"/>
    </location>
    <ligand>
        <name>S-adenosyl-L-methionine</name>
        <dbReference type="ChEBI" id="CHEBI:59789"/>
    </ligand>
</feature>
<feature type="binding site" evidence="1">
    <location>
        <position position="125"/>
    </location>
    <ligand>
        <name>S-adenosyl-L-methionine</name>
        <dbReference type="ChEBI" id="CHEBI:59789"/>
    </ligand>
</feature>
<dbReference type="EC" id="2.1.1.166" evidence="1"/>
<dbReference type="EMBL" id="CP000285">
    <property type="protein sequence ID" value="ABE60426.1"/>
    <property type="molecule type" value="Genomic_DNA"/>
</dbReference>
<dbReference type="RefSeq" id="WP_011508372.1">
    <property type="nucleotide sequence ID" value="NC_007963.1"/>
</dbReference>
<dbReference type="SMR" id="Q1QSY2"/>
<dbReference type="STRING" id="290398.Csal_3082"/>
<dbReference type="GeneID" id="95335778"/>
<dbReference type="KEGG" id="csa:Csal_3082"/>
<dbReference type="eggNOG" id="COG0293">
    <property type="taxonomic scope" value="Bacteria"/>
</dbReference>
<dbReference type="HOGENOM" id="CLU_009422_4_0_6"/>
<dbReference type="OrthoDB" id="9790080at2"/>
<dbReference type="Proteomes" id="UP000000239">
    <property type="component" value="Chromosome"/>
</dbReference>
<dbReference type="GO" id="GO:0005737">
    <property type="term" value="C:cytoplasm"/>
    <property type="evidence" value="ECO:0007669"/>
    <property type="project" value="UniProtKB-SubCell"/>
</dbReference>
<dbReference type="GO" id="GO:0008650">
    <property type="term" value="F:rRNA (uridine-2'-O-)-methyltransferase activity"/>
    <property type="evidence" value="ECO:0007669"/>
    <property type="project" value="UniProtKB-UniRule"/>
</dbReference>
<dbReference type="FunFam" id="3.40.50.150:FF:000005">
    <property type="entry name" value="Ribosomal RNA large subunit methyltransferase E"/>
    <property type="match status" value="1"/>
</dbReference>
<dbReference type="Gene3D" id="3.40.50.150">
    <property type="entry name" value="Vaccinia Virus protein VP39"/>
    <property type="match status" value="1"/>
</dbReference>
<dbReference type="HAMAP" id="MF_01547">
    <property type="entry name" value="RNA_methyltr_E"/>
    <property type="match status" value="1"/>
</dbReference>
<dbReference type="InterPro" id="IPR050082">
    <property type="entry name" value="RNA_methyltr_RlmE"/>
</dbReference>
<dbReference type="InterPro" id="IPR002877">
    <property type="entry name" value="RNA_MeTrfase_FtsJ_dom"/>
</dbReference>
<dbReference type="InterPro" id="IPR015507">
    <property type="entry name" value="rRNA-MeTfrase_E"/>
</dbReference>
<dbReference type="InterPro" id="IPR029063">
    <property type="entry name" value="SAM-dependent_MTases_sf"/>
</dbReference>
<dbReference type="NCBIfam" id="NF008390">
    <property type="entry name" value="PRK11188.1"/>
    <property type="match status" value="1"/>
</dbReference>
<dbReference type="PANTHER" id="PTHR10920">
    <property type="entry name" value="RIBOSOMAL RNA METHYLTRANSFERASE"/>
    <property type="match status" value="1"/>
</dbReference>
<dbReference type="PANTHER" id="PTHR10920:SF18">
    <property type="entry name" value="RRNA METHYLTRANSFERASE 2, MITOCHONDRIAL"/>
    <property type="match status" value="1"/>
</dbReference>
<dbReference type="Pfam" id="PF01728">
    <property type="entry name" value="FtsJ"/>
    <property type="match status" value="1"/>
</dbReference>
<dbReference type="PIRSF" id="PIRSF005461">
    <property type="entry name" value="23S_rRNA_mtase"/>
    <property type="match status" value="1"/>
</dbReference>
<dbReference type="SUPFAM" id="SSF53335">
    <property type="entry name" value="S-adenosyl-L-methionine-dependent methyltransferases"/>
    <property type="match status" value="1"/>
</dbReference>
<comment type="function">
    <text evidence="1">Specifically methylates the uridine in position 2552 of 23S rRNA at the 2'-O position of the ribose in the fully assembled 50S ribosomal subunit.</text>
</comment>
<comment type="catalytic activity">
    <reaction evidence="1">
        <text>uridine(2552) in 23S rRNA + S-adenosyl-L-methionine = 2'-O-methyluridine(2552) in 23S rRNA + S-adenosyl-L-homocysteine + H(+)</text>
        <dbReference type="Rhea" id="RHEA:42720"/>
        <dbReference type="Rhea" id="RHEA-COMP:10202"/>
        <dbReference type="Rhea" id="RHEA-COMP:10203"/>
        <dbReference type="ChEBI" id="CHEBI:15378"/>
        <dbReference type="ChEBI" id="CHEBI:57856"/>
        <dbReference type="ChEBI" id="CHEBI:59789"/>
        <dbReference type="ChEBI" id="CHEBI:65315"/>
        <dbReference type="ChEBI" id="CHEBI:74478"/>
        <dbReference type="EC" id="2.1.1.166"/>
    </reaction>
</comment>
<comment type="subcellular location">
    <subcellularLocation>
        <location evidence="1">Cytoplasm</location>
    </subcellularLocation>
</comment>
<comment type="similarity">
    <text evidence="1">Belongs to the class I-like SAM-binding methyltransferase superfamily. RNA methyltransferase RlmE family.</text>
</comment>
<reference key="1">
    <citation type="journal article" date="2011" name="Stand. Genomic Sci.">
        <title>Complete genome sequence of the halophilic and highly halotolerant Chromohalobacter salexigens type strain (1H11(T)).</title>
        <authorList>
            <person name="Copeland A."/>
            <person name="O'Connor K."/>
            <person name="Lucas S."/>
            <person name="Lapidus A."/>
            <person name="Berry K.W."/>
            <person name="Detter J.C."/>
            <person name="Del Rio T.G."/>
            <person name="Hammon N."/>
            <person name="Dalin E."/>
            <person name="Tice H."/>
            <person name="Pitluck S."/>
            <person name="Bruce D."/>
            <person name="Goodwin L."/>
            <person name="Han C."/>
            <person name="Tapia R."/>
            <person name="Saunders E."/>
            <person name="Schmutz J."/>
            <person name="Brettin T."/>
            <person name="Larimer F."/>
            <person name="Land M."/>
            <person name="Hauser L."/>
            <person name="Vargas C."/>
            <person name="Nieto J.J."/>
            <person name="Kyrpides N.C."/>
            <person name="Ivanova N."/>
            <person name="Goker M."/>
            <person name="Klenk H.P."/>
            <person name="Csonka L.N."/>
            <person name="Woyke T."/>
        </authorList>
    </citation>
    <scope>NUCLEOTIDE SEQUENCE [LARGE SCALE GENOMIC DNA]</scope>
    <source>
        <strain>ATCC BAA-138 / DSM 3043 / CIP 106854 / NCIMB 13768 / 1H11</strain>
    </source>
</reference>
<protein>
    <recommendedName>
        <fullName evidence="1">Ribosomal RNA large subunit methyltransferase E</fullName>
        <ecNumber evidence="1">2.1.1.166</ecNumber>
    </recommendedName>
    <alternativeName>
        <fullName evidence="1">23S rRNA Um2552 methyltransferase</fullName>
    </alternativeName>
    <alternativeName>
        <fullName evidence="1">rRNA (uridine-2'-O-)-methyltransferase</fullName>
    </alternativeName>
</protein>
<keyword id="KW-0963">Cytoplasm</keyword>
<keyword id="KW-0489">Methyltransferase</keyword>
<keyword id="KW-1185">Reference proteome</keyword>
<keyword id="KW-0698">rRNA processing</keyword>
<keyword id="KW-0949">S-adenosyl-L-methionine</keyword>
<keyword id="KW-0808">Transferase</keyword>
<accession>Q1QSY2</accession>
<proteinExistence type="inferred from homology"/>
<sequence>MARSSHTSKSSASWLKEHFDDRYVQRSWQDGYRSRASYKLLELDAKDALLKPGMTVIDLGAAPGGWSQIAADKVGDKGCVIASDILEMDALAGVTFVQGDFTEMEVLEQILVALEGRRVDLVMSDMAPNMSGMAAIDQPQAMYLVELALDLARQTLSPGGRFLAKVFQGEGFDAYLKELRGSFRKVVTRKPEASRARSREVYLLAEGFHG</sequence>
<name>RLME_CHRSD</name>
<organism>
    <name type="scientific">Chromohalobacter salexigens (strain ATCC BAA-138 / DSM 3043 / CIP 106854 / NCIMB 13768 / 1H11)</name>
    <dbReference type="NCBI Taxonomy" id="290398"/>
    <lineage>
        <taxon>Bacteria</taxon>
        <taxon>Pseudomonadati</taxon>
        <taxon>Pseudomonadota</taxon>
        <taxon>Gammaproteobacteria</taxon>
        <taxon>Oceanospirillales</taxon>
        <taxon>Halomonadaceae</taxon>
        <taxon>Chromohalobacter</taxon>
    </lineage>
</organism>